<reference key="1">
    <citation type="submission" date="2009-01" db="EMBL/GenBank/DDBJ databases">
        <title>Complete sequence of Diaphorobacter sp. TPSY.</title>
        <authorList>
            <consortium name="US DOE Joint Genome Institute"/>
            <person name="Lucas S."/>
            <person name="Copeland A."/>
            <person name="Lapidus A."/>
            <person name="Glavina del Rio T."/>
            <person name="Tice H."/>
            <person name="Bruce D."/>
            <person name="Goodwin L."/>
            <person name="Pitluck S."/>
            <person name="Chertkov O."/>
            <person name="Brettin T."/>
            <person name="Detter J.C."/>
            <person name="Han C."/>
            <person name="Larimer F."/>
            <person name="Land M."/>
            <person name="Hauser L."/>
            <person name="Kyrpides N."/>
            <person name="Mikhailova N."/>
            <person name="Coates J.D."/>
        </authorList>
    </citation>
    <scope>NUCLEOTIDE SEQUENCE [LARGE SCALE GENOMIC DNA]</scope>
    <source>
        <strain>TPSY</strain>
    </source>
</reference>
<protein>
    <recommendedName>
        <fullName evidence="1">UDP-N-acetylglucosamine 1-carboxyvinyltransferase</fullName>
        <ecNumber evidence="1">2.5.1.7</ecNumber>
    </recommendedName>
    <alternativeName>
        <fullName evidence="1">Enoylpyruvate transferase</fullName>
    </alternativeName>
    <alternativeName>
        <fullName evidence="1">UDP-N-acetylglucosamine enolpyruvyl transferase</fullName>
        <shortName evidence="1">EPT</shortName>
    </alternativeName>
</protein>
<gene>
    <name evidence="1" type="primary">murA</name>
    <name type="ordered locus">Dtpsy_0725</name>
</gene>
<feature type="chain" id="PRO_1000192081" description="UDP-N-acetylglucosamine 1-carboxyvinyltransferase">
    <location>
        <begin position="1"/>
        <end position="440"/>
    </location>
</feature>
<feature type="active site" description="Proton donor" evidence="1">
    <location>
        <position position="126"/>
    </location>
</feature>
<feature type="binding site" evidence="1">
    <location>
        <begin position="22"/>
        <end position="23"/>
    </location>
    <ligand>
        <name>phosphoenolpyruvate</name>
        <dbReference type="ChEBI" id="CHEBI:58702"/>
    </ligand>
</feature>
<feature type="binding site" evidence="1">
    <location>
        <position position="102"/>
    </location>
    <ligand>
        <name>UDP-N-acetyl-alpha-D-glucosamine</name>
        <dbReference type="ChEBI" id="CHEBI:57705"/>
    </ligand>
</feature>
<feature type="binding site" evidence="1">
    <location>
        <begin position="131"/>
        <end position="135"/>
    </location>
    <ligand>
        <name>UDP-N-acetyl-alpha-D-glucosamine</name>
        <dbReference type="ChEBI" id="CHEBI:57705"/>
    </ligand>
</feature>
<feature type="binding site" evidence="1">
    <location>
        <position position="320"/>
    </location>
    <ligand>
        <name>UDP-N-acetyl-alpha-D-glucosamine</name>
        <dbReference type="ChEBI" id="CHEBI:57705"/>
    </ligand>
</feature>
<feature type="binding site" evidence="1">
    <location>
        <position position="342"/>
    </location>
    <ligand>
        <name>UDP-N-acetyl-alpha-D-glucosamine</name>
        <dbReference type="ChEBI" id="CHEBI:57705"/>
    </ligand>
</feature>
<feature type="modified residue" description="2-(S-cysteinyl)pyruvic acid O-phosphothioketal" evidence="1">
    <location>
        <position position="126"/>
    </location>
</feature>
<evidence type="ECO:0000255" key="1">
    <source>
        <dbReference type="HAMAP-Rule" id="MF_00111"/>
    </source>
</evidence>
<keyword id="KW-0131">Cell cycle</keyword>
<keyword id="KW-0132">Cell division</keyword>
<keyword id="KW-0133">Cell shape</keyword>
<keyword id="KW-0961">Cell wall biogenesis/degradation</keyword>
<keyword id="KW-0963">Cytoplasm</keyword>
<keyword id="KW-0573">Peptidoglycan synthesis</keyword>
<keyword id="KW-0670">Pyruvate</keyword>
<keyword id="KW-1185">Reference proteome</keyword>
<keyword id="KW-0808">Transferase</keyword>
<dbReference type="EC" id="2.5.1.7" evidence="1"/>
<dbReference type="EMBL" id="CP001392">
    <property type="protein sequence ID" value="ACM32204.1"/>
    <property type="molecule type" value="Genomic_DNA"/>
</dbReference>
<dbReference type="RefSeq" id="WP_012655716.1">
    <property type="nucleotide sequence ID" value="NC_011992.1"/>
</dbReference>
<dbReference type="SMR" id="B9MDV0"/>
<dbReference type="KEGG" id="dia:Dtpsy_0725"/>
<dbReference type="eggNOG" id="COG0766">
    <property type="taxonomic scope" value="Bacteria"/>
</dbReference>
<dbReference type="HOGENOM" id="CLU_027387_0_0_4"/>
<dbReference type="UniPathway" id="UPA00219"/>
<dbReference type="Proteomes" id="UP000000450">
    <property type="component" value="Chromosome"/>
</dbReference>
<dbReference type="GO" id="GO:0005737">
    <property type="term" value="C:cytoplasm"/>
    <property type="evidence" value="ECO:0007669"/>
    <property type="project" value="UniProtKB-SubCell"/>
</dbReference>
<dbReference type="GO" id="GO:0008760">
    <property type="term" value="F:UDP-N-acetylglucosamine 1-carboxyvinyltransferase activity"/>
    <property type="evidence" value="ECO:0007669"/>
    <property type="project" value="UniProtKB-UniRule"/>
</dbReference>
<dbReference type="GO" id="GO:0051301">
    <property type="term" value="P:cell division"/>
    <property type="evidence" value="ECO:0007669"/>
    <property type="project" value="UniProtKB-KW"/>
</dbReference>
<dbReference type="GO" id="GO:0071555">
    <property type="term" value="P:cell wall organization"/>
    <property type="evidence" value="ECO:0007669"/>
    <property type="project" value="UniProtKB-KW"/>
</dbReference>
<dbReference type="GO" id="GO:0009252">
    <property type="term" value="P:peptidoglycan biosynthetic process"/>
    <property type="evidence" value="ECO:0007669"/>
    <property type="project" value="UniProtKB-UniRule"/>
</dbReference>
<dbReference type="GO" id="GO:0008360">
    <property type="term" value="P:regulation of cell shape"/>
    <property type="evidence" value="ECO:0007669"/>
    <property type="project" value="UniProtKB-KW"/>
</dbReference>
<dbReference type="GO" id="GO:0019277">
    <property type="term" value="P:UDP-N-acetylgalactosamine biosynthetic process"/>
    <property type="evidence" value="ECO:0007669"/>
    <property type="project" value="InterPro"/>
</dbReference>
<dbReference type="CDD" id="cd01555">
    <property type="entry name" value="UdpNAET"/>
    <property type="match status" value="1"/>
</dbReference>
<dbReference type="FunFam" id="3.65.10.10:FF:000001">
    <property type="entry name" value="UDP-N-acetylglucosamine 1-carboxyvinyltransferase"/>
    <property type="match status" value="1"/>
</dbReference>
<dbReference type="Gene3D" id="3.65.10.10">
    <property type="entry name" value="Enolpyruvate transferase domain"/>
    <property type="match status" value="2"/>
</dbReference>
<dbReference type="HAMAP" id="MF_00111">
    <property type="entry name" value="MurA"/>
    <property type="match status" value="1"/>
</dbReference>
<dbReference type="InterPro" id="IPR001986">
    <property type="entry name" value="Enolpyruvate_Tfrase_dom"/>
</dbReference>
<dbReference type="InterPro" id="IPR036968">
    <property type="entry name" value="Enolpyruvate_Tfrase_sf"/>
</dbReference>
<dbReference type="InterPro" id="IPR050068">
    <property type="entry name" value="MurA_subfamily"/>
</dbReference>
<dbReference type="InterPro" id="IPR013792">
    <property type="entry name" value="RNA3'P_cycl/enolpyr_Trfase_a/b"/>
</dbReference>
<dbReference type="InterPro" id="IPR005750">
    <property type="entry name" value="UDP_GlcNAc_COvinyl_MurA"/>
</dbReference>
<dbReference type="NCBIfam" id="TIGR01072">
    <property type="entry name" value="murA"/>
    <property type="match status" value="1"/>
</dbReference>
<dbReference type="NCBIfam" id="NF006873">
    <property type="entry name" value="PRK09369.1"/>
    <property type="match status" value="1"/>
</dbReference>
<dbReference type="PANTHER" id="PTHR43783">
    <property type="entry name" value="UDP-N-ACETYLGLUCOSAMINE 1-CARBOXYVINYLTRANSFERASE"/>
    <property type="match status" value="1"/>
</dbReference>
<dbReference type="PANTHER" id="PTHR43783:SF1">
    <property type="entry name" value="UDP-N-ACETYLGLUCOSAMINE 1-CARBOXYVINYLTRANSFERASE"/>
    <property type="match status" value="1"/>
</dbReference>
<dbReference type="Pfam" id="PF00275">
    <property type="entry name" value="EPSP_synthase"/>
    <property type="match status" value="1"/>
</dbReference>
<dbReference type="SUPFAM" id="SSF55205">
    <property type="entry name" value="EPT/RTPC-like"/>
    <property type="match status" value="1"/>
</dbReference>
<name>MURA_ACIET</name>
<sequence length="440" mass="46283">MDKLLIRGGRPLVGEVPISGAKNAALPELCAALLTADPVTLHNVPRLQDVATMLRLIRNMGVQVDRIANPDCSVADAAGIVRLDAGALSTPEAPYDLVKTMRASVLALGPLLARFGEATVSLPGGCAIGSRPVDQHIKGLQAMGAQIVVEHGYMIARLPQGCTRLRGARITTDMVTVTGTENLLMAATLAEGETVLENAAQEPEVADLAEMLIKMGARIEGHGTSRIRIQGVERLHGCEHAVVADRIEAGTFLCAVAATGGDALLRHGRADHLDAVIDKLRDAGVQVAPEEGGIRVRSPGAAQLKAQGFRTTEYPGFPTDMQAQFMALNVVAQGTATVAETIFENRFMHVNELLRLGAKIQTTDGRVAVIEGLGGAAPAGARLSGATVMATDLRASASLVIAGLVADGETLVDRIYHLDRGYDCMEAKLRGLGADIERIQ</sequence>
<organism>
    <name type="scientific">Acidovorax ebreus (strain TPSY)</name>
    <name type="common">Diaphorobacter sp. (strain TPSY)</name>
    <dbReference type="NCBI Taxonomy" id="535289"/>
    <lineage>
        <taxon>Bacteria</taxon>
        <taxon>Pseudomonadati</taxon>
        <taxon>Pseudomonadota</taxon>
        <taxon>Betaproteobacteria</taxon>
        <taxon>Burkholderiales</taxon>
        <taxon>Comamonadaceae</taxon>
        <taxon>Diaphorobacter</taxon>
    </lineage>
</organism>
<accession>B9MDV0</accession>
<proteinExistence type="inferred from homology"/>
<comment type="function">
    <text evidence="1">Cell wall formation. Adds enolpyruvyl to UDP-N-acetylglucosamine.</text>
</comment>
<comment type="catalytic activity">
    <reaction evidence="1">
        <text>phosphoenolpyruvate + UDP-N-acetyl-alpha-D-glucosamine = UDP-N-acetyl-3-O-(1-carboxyvinyl)-alpha-D-glucosamine + phosphate</text>
        <dbReference type="Rhea" id="RHEA:18681"/>
        <dbReference type="ChEBI" id="CHEBI:43474"/>
        <dbReference type="ChEBI" id="CHEBI:57705"/>
        <dbReference type="ChEBI" id="CHEBI:58702"/>
        <dbReference type="ChEBI" id="CHEBI:68483"/>
        <dbReference type="EC" id="2.5.1.7"/>
    </reaction>
</comment>
<comment type="pathway">
    <text evidence="1">Cell wall biogenesis; peptidoglycan biosynthesis.</text>
</comment>
<comment type="subcellular location">
    <subcellularLocation>
        <location evidence="1">Cytoplasm</location>
    </subcellularLocation>
</comment>
<comment type="similarity">
    <text evidence="1">Belongs to the EPSP synthase family. MurA subfamily.</text>
</comment>